<evidence type="ECO:0000250" key="1"/>
<evidence type="ECO:0000269" key="2">
    <source>
    </source>
</evidence>
<evidence type="ECO:0000305" key="3"/>
<dbReference type="EC" id="1.3.1.34" evidence="3"/>
<dbReference type="EMBL" id="AJ222587">
    <property type="protein sequence ID" value="CAA10869.1"/>
    <property type="molecule type" value="Genomic_DNA"/>
</dbReference>
<dbReference type="EMBL" id="AL009126">
    <property type="protein sequence ID" value="CAB13279.1"/>
    <property type="molecule type" value="Genomic_DNA"/>
</dbReference>
<dbReference type="PIR" id="C69865">
    <property type="entry name" value="C69865"/>
</dbReference>
<dbReference type="RefSeq" id="NP_389289.1">
    <property type="nucleotide sequence ID" value="NC_000964.3"/>
</dbReference>
<dbReference type="RefSeq" id="WP_003232398.1">
    <property type="nucleotide sequence ID" value="NZ_OZ025638.1"/>
</dbReference>
<dbReference type="SMR" id="O34717"/>
<dbReference type="FunCoup" id="O34717">
    <property type="interactions" value="327"/>
</dbReference>
<dbReference type="STRING" id="224308.BSU14060"/>
<dbReference type="PaxDb" id="224308-BSU14060"/>
<dbReference type="EnsemblBacteria" id="CAB13279">
    <property type="protein sequence ID" value="CAB13279"/>
    <property type="gene ID" value="BSU_14060"/>
</dbReference>
<dbReference type="GeneID" id="939226"/>
<dbReference type="KEGG" id="bsu:BSU14060"/>
<dbReference type="PATRIC" id="fig|224308.179.peg.1533"/>
<dbReference type="eggNOG" id="COG1028">
    <property type="taxonomic scope" value="Bacteria"/>
</dbReference>
<dbReference type="InParanoid" id="O34717"/>
<dbReference type="OrthoDB" id="9803333at2"/>
<dbReference type="PhylomeDB" id="O34717"/>
<dbReference type="BioCyc" id="BSUB:BSU14060-MONOMER"/>
<dbReference type="UniPathway" id="UPA00659"/>
<dbReference type="Proteomes" id="UP000001570">
    <property type="component" value="Chromosome"/>
</dbReference>
<dbReference type="GO" id="GO:0008670">
    <property type="term" value="F:2,4-dienoyl-CoA reductase (NADPH) activity"/>
    <property type="evidence" value="ECO:0007669"/>
    <property type="project" value="UniProtKB-EC"/>
</dbReference>
<dbReference type="GO" id="GO:0016628">
    <property type="term" value="F:oxidoreductase activity, acting on the CH-CH group of donors, NAD or NADP as acceptor"/>
    <property type="evidence" value="ECO:0000318"/>
    <property type="project" value="GO_Central"/>
</dbReference>
<dbReference type="GO" id="GO:0006635">
    <property type="term" value="P:fatty acid beta-oxidation"/>
    <property type="evidence" value="ECO:0007669"/>
    <property type="project" value="UniProtKB-UniPathway"/>
</dbReference>
<dbReference type="GO" id="GO:0006631">
    <property type="term" value="P:fatty acid metabolic process"/>
    <property type="evidence" value="ECO:0000318"/>
    <property type="project" value="GO_Central"/>
</dbReference>
<dbReference type="CDD" id="cd05369">
    <property type="entry name" value="TER_DECR_SDR_a"/>
    <property type="match status" value="1"/>
</dbReference>
<dbReference type="FunFam" id="3.40.50.720:FF:000084">
    <property type="entry name" value="Short-chain dehydrogenase reductase"/>
    <property type="match status" value="1"/>
</dbReference>
<dbReference type="Gene3D" id="3.40.50.720">
    <property type="entry name" value="NAD(P)-binding Rossmann-like Domain"/>
    <property type="match status" value="1"/>
</dbReference>
<dbReference type="InterPro" id="IPR045017">
    <property type="entry name" value="DECR2-like"/>
</dbReference>
<dbReference type="InterPro" id="IPR036291">
    <property type="entry name" value="NAD(P)-bd_dom_sf"/>
</dbReference>
<dbReference type="InterPro" id="IPR002347">
    <property type="entry name" value="SDR_fam"/>
</dbReference>
<dbReference type="NCBIfam" id="NF005811">
    <property type="entry name" value="PRK07677.1"/>
    <property type="match status" value="1"/>
</dbReference>
<dbReference type="PANTHER" id="PTHR43296">
    <property type="entry name" value="PEROXISOMAL 2,4-DIENOYL-COA REDUCTASE"/>
    <property type="match status" value="1"/>
</dbReference>
<dbReference type="PANTHER" id="PTHR43296:SF2">
    <property type="entry name" value="PEROXISOMAL 2,4-DIENOYL-COA REDUCTASE [(3E)-ENOYL-COA-PRODUCING]"/>
    <property type="match status" value="1"/>
</dbReference>
<dbReference type="Pfam" id="PF13561">
    <property type="entry name" value="adh_short_C2"/>
    <property type="match status" value="1"/>
</dbReference>
<dbReference type="PRINTS" id="PR00081">
    <property type="entry name" value="GDHRDH"/>
</dbReference>
<dbReference type="PRINTS" id="PR00080">
    <property type="entry name" value="SDRFAMILY"/>
</dbReference>
<dbReference type="SUPFAM" id="SSF51735">
    <property type="entry name" value="NAD(P)-binding Rossmann-fold domains"/>
    <property type="match status" value="1"/>
</dbReference>
<reference key="1">
    <citation type="submission" date="1997-11" db="EMBL/GenBank/DDBJ databases">
        <title>Sequence of the Bacillus subtilis chromosome from ykuA to cse-15.</title>
        <authorList>
            <person name="Scanlan E."/>
            <person name="Devine K.M."/>
        </authorList>
    </citation>
    <scope>NUCLEOTIDE SEQUENCE [GENOMIC DNA]</scope>
    <source>
        <strain>168</strain>
    </source>
</reference>
<reference key="2">
    <citation type="journal article" date="1997" name="Nature">
        <title>The complete genome sequence of the Gram-positive bacterium Bacillus subtilis.</title>
        <authorList>
            <person name="Kunst F."/>
            <person name="Ogasawara N."/>
            <person name="Moszer I."/>
            <person name="Albertini A.M."/>
            <person name="Alloni G."/>
            <person name="Azevedo V."/>
            <person name="Bertero M.G."/>
            <person name="Bessieres P."/>
            <person name="Bolotin A."/>
            <person name="Borchert S."/>
            <person name="Borriss R."/>
            <person name="Boursier L."/>
            <person name="Brans A."/>
            <person name="Braun M."/>
            <person name="Brignell S.C."/>
            <person name="Bron S."/>
            <person name="Brouillet S."/>
            <person name="Bruschi C.V."/>
            <person name="Caldwell B."/>
            <person name="Capuano V."/>
            <person name="Carter N.M."/>
            <person name="Choi S.-K."/>
            <person name="Codani J.-J."/>
            <person name="Connerton I.F."/>
            <person name="Cummings N.J."/>
            <person name="Daniel R.A."/>
            <person name="Denizot F."/>
            <person name="Devine K.M."/>
            <person name="Duesterhoeft A."/>
            <person name="Ehrlich S.D."/>
            <person name="Emmerson P.T."/>
            <person name="Entian K.-D."/>
            <person name="Errington J."/>
            <person name="Fabret C."/>
            <person name="Ferrari E."/>
            <person name="Foulger D."/>
            <person name="Fritz C."/>
            <person name="Fujita M."/>
            <person name="Fujita Y."/>
            <person name="Fuma S."/>
            <person name="Galizzi A."/>
            <person name="Galleron N."/>
            <person name="Ghim S.-Y."/>
            <person name="Glaser P."/>
            <person name="Goffeau A."/>
            <person name="Golightly E.J."/>
            <person name="Grandi G."/>
            <person name="Guiseppi G."/>
            <person name="Guy B.J."/>
            <person name="Haga K."/>
            <person name="Haiech J."/>
            <person name="Harwood C.R."/>
            <person name="Henaut A."/>
            <person name="Hilbert H."/>
            <person name="Holsappel S."/>
            <person name="Hosono S."/>
            <person name="Hullo M.-F."/>
            <person name="Itaya M."/>
            <person name="Jones L.-M."/>
            <person name="Joris B."/>
            <person name="Karamata D."/>
            <person name="Kasahara Y."/>
            <person name="Klaerr-Blanchard M."/>
            <person name="Klein C."/>
            <person name="Kobayashi Y."/>
            <person name="Koetter P."/>
            <person name="Koningstein G."/>
            <person name="Krogh S."/>
            <person name="Kumano M."/>
            <person name="Kurita K."/>
            <person name="Lapidus A."/>
            <person name="Lardinois S."/>
            <person name="Lauber J."/>
            <person name="Lazarevic V."/>
            <person name="Lee S.-M."/>
            <person name="Levine A."/>
            <person name="Liu H."/>
            <person name="Masuda S."/>
            <person name="Mauel C."/>
            <person name="Medigue C."/>
            <person name="Medina N."/>
            <person name="Mellado R.P."/>
            <person name="Mizuno M."/>
            <person name="Moestl D."/>
            <person name="Nakai S."/>
            <person name="Noback M."/>
            <person name="Noone D."/>
            <person name="O'Reilly M."/>
            <person name="Ogawa K."/>
            <person name="Ogiwara A."/>
            <person name="Oudega B."/>
            <person name="Park S.-H."/>
            <person name="Parro V."/>
            <person name="Pohl T.M."/>
            <person name="Portetelle D."/>
            <person name="Porwollik S."/>
            <person name="Prescott A.M."/>
            <person name="Presecan E."/>
            <person name="Pujic P."/>
            <person name="Purnelle B."/>
            <person name="Rapoport G."/>
            <person name="Rey M."/>
            <person name="Reynolds S."/>
            <person name="Rieger M."/>
            <person name="Rivolta C."/>
            <person name="Rocha E."/>
            <person name="Roche B."/>
            <person name="Rose M."/>
            <person name="Sadaie Y."/>
            <person name="Sato T."/>
            <person name="Scanlan E."/>
            <person name="Schleich S."/>
            <person name="Schroeter R."/>
            <person name="Scoffone F."/>
            <person name="Sekiguchi J."/>
            <person name="Sekowska A."/>
            <person name="Seror S.J."/>
            <person name="Serror P."/>
            <person name="Shin B.-S."/>
            <person name="Soldo B."/>
            <person name="Sorokin A."/>
            <person name="Tacconi E."/>
            <person name="Takagi T."/>
            <person name="Takahashi H."/>
            <person name="Takemaru K."/>
            <person name="Takeuchi M."/>
            <person name="Tamakoshi A."/>
            <person name="Tanaka T."/>
            <person name="Terpstra P."/>
            <person name="Tognoni A."/>
            <person name="Tosato V."/>
            <person name="Uchiyama S."/>
            <person name="Vandenbol M."/>
            <person name="Vannier F."/>
            <person name="Vassarotti A."/>
            <person name="Viari A."/>
            <person name="Wambutt R."/>
            <person name="Wedler E."/>
            <person name="Wedler H."/>
            <person name="Weitzenegger T."/>
            <person name="Winters P."/>
            <person name="Wipat A."/>
            <person name="Yamamoto H."/>
            <person name="Yamane K."/>
            <person name="Yasumoto K."/>
            <person name="Yata K."/>
            <person name="Yoshida K."/>
            <person name="Yoshikawa H.-F."/>
            <person name="Zumstein E."/>
            <person name="Yoshikawa H."/>
            <person name="Danchin A."/>
        </authorList>
    </citation>
    <scope>NUCLEOTIDE SEQUENCE [LARGE SCALE GENOMIC DNA]</scope>
    <source>
        <strain>168</strain>
    </source>
</reference>
<reference key="3">
    <citation type="journal article" date="2007" name="J. Biol. Chem.">
        <title>Organization and function of the YsiA regulon of Bacillus subtilis involved in fatty acid degradation.</title>
        <authorList>
            <person name="Matsuoka H."/>
            <person name="Hirooka K."/>
            <person name="Fujita Y."/>
        </authorList>
    </citation>
    <scope>GENE NAME</scope>
    <scope>INDUCTION</scope>
    <source>
        <strain>168</strain>
    </source>
</reference>
<gene>
    <name type="primary">fadH</name>
    <name type="synonym">ykuF</name>
    <name type="ordered locus">BSU14060</name>
</gene>
<protein>
    <recommendedName>
        <fullName>Probable 2,4-dienoyl-CoA reductase [(2E)-enoyl-CoA-producing]</fullName>
        <ecNumber evidence="3">1.3.1.34</ecNumber>
    </recommendedName>
</protein>
<feature type="chain" id="PRO_0000054846" description="Probable 2,4-dienoyl-CoA reductase [(2E)-enoyl-CoA-producing]">
    <location>
        <begin position="1"/>
        <end position="254"/>
    </location>
</feature>
<feature type="active site" description="Proton acceptor" evidence="1">
    <location>
        <position position="142"/>
    </location>
</feature>
<feature type="binding site" evidence="1">
    <location>
        <begin position="6"/>
        <end position="38"/>
    </location>
    <ligand>
        <name>NADP(+)</name>
        <dbReference type="ChEBI" id="CHEBI:58349"/>
    </ligand>
</feature>
<feature type="binding site" evidence="1">
    <location>
        <position position="100"/>
    </location>
    <ligand>
        <name>substrate</name>
    </ligand>
</feature>
<feature type="binding site" evidence="1">
    <location>
        <position position="157"/>
    </location>
    <ligand>
        <name>NAD(+)</name>
        <dbReference type="ChEBI" id="CHEBI:57540"/>
    </ligand>
</feature>
<comment type="function">
    <text evidence="1">Auxiliary enzyme of beta-oxidation. It participates in the metabolism of unsaturated fatty enoyl-CoA esters having double bonds in both even- and odd-numbered positions. Catalyzes the NADP-dependent reduction of 2,4-dienoyl-CoA to yield trans-3-enoyl-CoA (By similarity).</text>
</comment>
<comment type="catalytic activity">
    <reaction>
        <text>a 4,5-saturated-(2E)-enoyl-CoA + NADP(+) = a (2E,4E)-dienoyl-CoA + NADPH + H(+)</text>
        <dbReference type="Rhea" id="RHEA:12136"/>
        <dbReference type="ChEBI" id="CHEBI:15378"/>
        <dbReference type="ChEBI" id="CHEBI:57783"/>
        <dbReference type="ChEBI" id="CHEBI:58349"/>
        <dbReference type="ChEBI" id="CHEBI:85100"/>
        <dbReference type="ChEBI" id="CHEBI:85101"/>
        <dbReference type="EC" id="1.3.1.34"/>
    </reaction>
</comment>
<comment type="catalytic activity">
    <reaction>
        <text>a (2E,4Z)-dienoyl-CoA + NADPH + H(+) = a 4,5-saturated-(2E)-enoyl-CoA + NADP(+)</text>
        <dbReference type="Rhea" id="RHEA:45232"/>
        <dbReference type="ChEBI" id="CHEBI:15378"/>
        <dbReference type="ChEBI" id="CHEBI:57783"/>
        <dbReference type="ChEBI" id="CHEBI:58349"/>
        <dbReference type="ChEBI" id="CHEBI:85099"/>
        <dbReference type="ChEBI" id="CHEBI:85100"/>
        <dbReference type="EC" id="1.3.1.34"/>
    </reaction>
</comment>
<comment type="pathway">
    <text>Lipid metabolism; fatty acid beta-oxidation.</text>
</comment>
<comment type="induction">
    <text evidence="2">Repressed by FadR in the absence of LCFAs (fatty acids of 14-20 carbon atoms). When LCFAs are present in the medium, they are converted to long-chain acyl-CoAs, which antagonize FadR as to its binding to fadR boxes on target DNA and thus derepress transcription.</text>
</comment>
<comment type="similarity">
    <text evidence="3">Belongs to the short-chain dehydrogenases/reductases (SDR) family. 2,4-dienoyl-CoA reductase subfamily.</text>
</comment>
<keyword id="KW-0276">Fatty acid metabolism</keyword>
<keyword id="KW-0442">Lipid degradation</keyword>
<keyword id="KW-0443">Lipid metabolism</keyword>
<keyword id="KW-0520">NAD</keyword>
<keyword id="KW-0521">NADP</keyword>
<keyword id="KW-0560">Oxidoreductase</keyword>
<keyword id="KW-1185">Reference proteome</keyword>
<sequence>MEKKAVIITGGSSGMGKAMAKKQAELGWHVMVTGRNHEALEETKKEIQTFEGQVACFQMDVRSDSAASDMIKEAVKAFGRLDALINNAAGNFICPAEKLTPNGWKAVIEIVLNGTFFCSQAAARHWIDQKQQGVILNMAATYAWGAGAGVVHSAAAKAGVLSLTRTLAVEWGSKYGIRTNAIAPGPIERTGGAEKLFESEKAMARTMNSVPLGRLGTPEEIAALAAFLLSDEASYINGDCITMDGGQWLNPYPF</sequence>
<accession>O34717</accession>
<organism>
    <name type="scientific">Bacillus subtilis (strain 168)</name>
    <dbReference type="NCBI Taxonomy" id="224308"/>
    <lineage>
        <taxon>Bacteria</taxon>
        <taxon>Bacillati</taxon>
        <taxon>Bacillota</taxon>
        <taxon>Bacilli</taxon>
        <taxon>Bacillales</taxon>
        <taxon>Bacillaceae</taxon>
        <taxon>Bacillus</taxon>
    </lineage>
</organism>
<proteinExistence type="evidence at transcript level"/>
<name>FADH_BACSU</name>